<comment type="function">
    <text evidence="3 4">Member of the two-component regulatory system YdfH/YdfI. Regulates the transcription of ydfJ by binding to its promoter region.</text>
</comment>
<comment type="subcellular location">
    <subcellularLocation>
        <location evidence="5">Cytoplasm</location>
    </subcellularLocation>
</comment>
<comment type="PTM">
    <text evidence="5">Phosphorylated by YdfH.</text>
</comment>
<dbReference type="EMBL" id="AB001488">
    <property type="protein sequence ID" value="BAA19376.1"/>
    <property type="molecule type" value="Genomic_DNA"/>
</dbReference>
<dbReference type="EMBL" id="AL009126">
    <property type="protein sequence ID" value="CAB12349.1"/>
    <property type="molecule type" value="Genomic_DNA"/>
</dbReference>
<dbReference type="PIR" id="G69780">
    <property type="entry name" value="G69780"/>
</dbReference>
<dbReference type="RefSeq" id="NP_388423.1">
    <property type="nucleotide sequence ID" value="NC_000964.3"/>
</dbReference>
<dbReference type="RefSeq" id="WP_003244318.1">
    <property type="nucleotide sequence ID" value="NZ_OZ025638.1"/>
</dbReference>
<dbReference type="SMR" id="P96686"/>
<dbReference type="FunCoup" id="P96686">
    <property type="interactions" value="215"/>
</dbReference>
<dbReference type="STRING" id="224308.BSU05420"/>
<dbReference type="jPOST" id="P96686"/>
<dbReference type="PaxDb" id="224308-BSU05420"/>
<dbReference type="EnsemblBacteria" id="CAB12349">
    <property type="protein sequence ID" value="CAB12349"/>
    <property type="gene ID" value="BSU_05420"/>
</dbReference>
<dbReference type="GeneID" id="938080"/>
<dbReference type="KEGG" id="bsu:BSU05420"/>
<dbReference type="PATRIC" id="fig|224308.179.peg.581"/>
<dbReference type="eggNOG" id="COG2197">
    <property type="taxonomic scope" value="Bacteria"/>
</dbReference>
<dbReference type="InParanoid" id="P96686"/>
<dbReference type="OrthoDB" id="9780153at2"/>
<dbReference type="PhylomeDB" id="P96686"/>
<dbReference type="BioCyc" id="BSUB:BSU05420-MONOMER"/>
<dbReference type="Proteomes" id="UP000001570">
    <property type="component" value="Chromosome"/>
</dbReference>
<dbReference type="GO" id="GO:0005737">
    <property type="term" value="C:cytoplasm"/>
    <property type="evidence" value="ECO:0007669"/>
    <property type="project" value="UniProtKB-SubCell"/>
</dbReference>
<dbReference type="GO" id="GO:0003677">
    <property type="term" value="F:DNA binding"/>
    <property type="evidence" value="ECO:0007669"/>
    <property type="project" value="UniProtKB-KW"/>
</dbReference>
<dbReference type="GO" id="GO:0000160">
    <property type="term" value="P:phosphorelay signal transduction system"/>
    <property type="evidence" value="ECO:0007669"/>
    <property type="project" value="UniProtKB-KW"/>
</dbReference>
<dbReference type="GO" id="GO:0006355">
    <property type="term" value="P:regulation of DNA-templated transcription"/>
    <property type="evidence" value="ECO:0007669"/>
    <property type="project" value="InterPro"/>
</dbReference>
<dbReference type="CDD" id="cd06170">
    <property type="entry name" value="LuxR_C_like"/>
    <property type="match status" value="1"/>
</dbReference>
<dbReference type="CDD" id="cd17535">
    <property type="entry name" value="REC_NarL-like"/>
    <property type="match status" value="1"/>
</dbReference>
<dbReference type="Gene3D" id="3.40.50.2300">
    <property type="match status" value="1"/>
</dbReference>
<dbReference type="InterPro" id="IPR011006">
    <property type="entry name" value="CheY-like_superfamily"/>
</dbReference>
<dbReference type="InterPro" id="IPR016032">
    <property type="entry name" value="Sig_transdc_resp-reg_C-effctor"/>
</dbReference>
<dbReference type="InterPro" id="IPR001789">
    <property type="entry name" value="Sig_transdc_resp-reg_receiver"/>
</dbReference>
<dbReference type="InterPro" id="IPR000792">
    <property type="entry name" value="Tscrpt_reg_LuxR_C"/>
</dbReference>
<dbReference type="InterPro" id="IPR039420">
    <property type="entry name" value="WalR-like"/>
</dbReference>
<dbReference type="PANTHER" id="PTHR43214:SF37">
    <property type="entry name" value="TRANSCRIPTIONAL REGULATORY PROTEIN YDFI"/>
    <property type="match status" value="1"/>
</dbReference>
<dbReference type="PANTHER" id="PTHR43214">
    <property type="entry name" value="TWO-COMPONENT RESPONSE REGULATOR"/>
    <property type="match status" value="1"/>
</dbReference>
<dbReference type="Pfam" id="PF00196">
    <property type="entry name" value="GerE"/>
    <property type="match status" value="1"/>
</dbReference>
<dbReference type="Pfam" id="PF00072">
    <property type="entry name" value="Response_reg"/>
    <property type="match status" value="1"/>
</dbReference>
<dbReference type="PRINTS" id="PR00038">
    <property type="entry name" value="HTHLUXR"/>
</dbReference>
<dbReference type="SMART" id="SM00421">
    <property type="entry name" value="HTH_LUXR"/>
    <property type="match status" value="1"/>
</dbReference>
<dbReference type="SMART" id="SM00448">
    <property type="entry name" value="REC"/>
    <property type="match status" value="1"/>
</dbReference>
<dbReference type="SUPFAM" id="SSF46894">
    <property type="entry name" value="C-terminal effector domain of the bipartite response regulators"/>
    <property type="match status" value="1"/>
</dbReference>
<dbReference type="SUPFAM" id="SSF52172">
    <property type="entry name" value="CheY-like"/>
    <property type="match status" value="1"/>
</dbReference>
<dbReference type="PROSITE" id="PS00622">
    <property type="entry name" value="HTH_LUXR_1"/>
    <property type="match status" value="1"/>
</dbReference>
<dbReference type="PROSITE" id="PS50043">
    <property type="entry name" value="HTH_LUXR_2"/>
    <property type="match status" value="1"/>
</dbReference>
<dbReference type="PROSITE" id="PS50110">
    <property type="entry name" value="RESPONSE_REGULATORY"/>
    <property type="match status" value="1"/>
</dbReference>
<organism>
    <name type="scientific">Bacillus subtilis (strain 168)</name>
    <dbReference type="NCBI Taxonomy" id="224308"/>
    <lineage>
        <taxon>Bacteria</taxon>
        <taxon>Bacillati</taxon>
        <taxon>Bacillota</taxon>
        <taxon>Bacilli</taxon>
        <taxon>Bacillales</taxon>
        <taxon>Bacillaceae</taxon>
        <taxon>Bacillus</taxon>
    </lineage>
</organism>
<sequence>MNKVLIVDDHLVVREGLKLLIETNDQYTIIGEAENGKVAVRLADELEPDIILMDLYMPEMSGLEAIKQIKEKHDTPIIILTTYNEDHLMIEGIELGAKGYLLKDTSSETLFHTMDAAIRGNVLLQPDILKRLQEIQFERMKKQRNETQLTEKEVIVLKAIAKGLKSKAIAFDLGVSERTVKSRLTSIYNKLGANSRTEAVTIAMQKGILTIDN</sequence>
<reference key="1">
    <citation type="submission" date="1997-03" db="EMBL/GenBank/DDBJ databases">
        <title>A 148 kbp sequence of the region between 35 and 47 degree of the Bacillus subtilis genome.</title>
        <authorList>
            <person name="Kasahara Y."/>
            <person name="Nakai S."/>
            <person name="Lee S."/>
            <person name="Sadaie Y."/>
            <person name="Ogasawara N."/>
        </authorList>
    </citation>
    <scope>NUCLEOTIDE SEQUENCE [GENOMIC DNA]</scope>
    <source>
        <strain>168</strain>
    </source>
</reference>
<reference key="2">
    <citation type="journal article" date="1997" name="Nature">
        <title>The complete genome sequence of the Gram-positive bacterium Bacillus subtilis.</title>
        <authorList>
            <person name="Kunst F."/>
            <person name="Ogasawara N."/>
            <person name="Moszer I."/>
            <person name="Albertini A.M."/>
            <person name="Alloni G."/>
            <person name="Azevedo V."/>
            <person name="Bertero M.G."/>
            <person name="Bessieres P."/>
            <person name="Bolotin A."/>
            <person name="Borchert S."/>
            <person name="Borriss R."/>
            <person name="Boursier L."/>
            <person name="Brans A."/>
            <person name="Braun M."/>
            <person name="Brignell S.C."/>
            <person name="Bron S."/>
            <person name="Brouillet S."/>
            <person name="Bruschi C.V."/>
            <person name="Caldwell B."/>
            <person name="Capuano V."/>
            <person name="Carter N.M."/>
            <person name="Choi S.-K."/>
            <person name="Codani J.-J."/>
            <person name="Connerton I.F."/>
            <person name="Cummings N.J."/>
            <person name="Daniel R.A."/>
            <person name="Denizot F."/>
            <person name="Devine K.M."/>
            <person name="Duesterhoeft A."/>
            <person name="Ehrlich S.D."/>
            <person name="Emmerson P.T."/>
            <person name="Entian K.-D."/>
            <person name="Errington J."/>
            <person name="Fabret C."/>
            <person name="Ferrari E."/>
            <person name="Foulger D."/>
            <person name="Fritz C."/>
            <person name="Fujita M."/>
            <person name="Fujita Y."/>
            <person name="Fuma S."/>
            <person name="Galizzi A."/>
            <person name="Galleron N."/>
            <person name="Ghim S.-Y."/>
            <person name="Glaser P."/>
            <person name="Goffeau A."/>
            <person name="Golightly E.J."/>
            <person name="Grandi G."/>
            <person name="Guiseppi G."/>
            <person name="Guy B.J."/>
            <person name="Haga K."/>
            <person name="Haiech J."/>
            <person name="Harwood C.R."/>
            <person name="Henaut A."/>
            <person name="Hilbert H."/>
            <person name="Holsappel S."/>
            <person name="Hosono S."/>
            <person name="Hullo M.-F."/>
            <person name="Itaya M."/>
            <person name="Jones L.-M."/>
            <person name="Joris B."/>
            <person name="Karamata D."/>
            <person name="Kasahara Y."/>
            <person name="Klaerr-Blanchard M."/>
            <person name="Klein C."/>
            <person name="Kobayashi Y."/>
            <person name="Koetter P."/>
            <person name="Koningstein G."/>
            <person name="Krogh S."/>
            <person name="Kumano M."/>
            <person name="Kurita K."/>
            <person name="Lapidus A."/>
            <person name="Lardinois S."/>
            <person name="Lauber J."/>
            <person name="Lazarevic V."/>
            <person name="Lee S.-M."/>
            <person name="Levine A."/>
            <person name="Liu H."/>
            <person name="Masuda S."/>
            <person name="Mauel C."/>
            <person name="Medigue C."/>
            <person name="Medina N."/>
            <person name="Mellado R.P."/>
            <person name="Mizuno M."/>
            <person name="Moestl D."/>
            <person name="Nakai S."/>
            <person name="Noback M."/>
            <person name="Noone D."/>
            <person name="O'Reilly M."/>
            <person name="Ogawa K."/>
            <person name="Ogiwara A."/>
            <person name="Oudega B."/>
            <person name="Park S.-H."/>
            <person name="Parro V."/>
            <person name="Pohl T.M."/>
            <person name="Portetelle D."/>
            <person name="Porwollik S."/>
            <person name="Prescott A.M."/>
            <person name="Presecan E."/>
            <person name="Pujic P."/>
            <person name="Purnelle B."/>
            <person name="Rapoport G."/>
            <person name="Rey M."/>
            <person name="Reynolds S."/>
            <person name="Rieger M."/>
            <person name="Rivolta C."/>
            <person name="Rocha E."/>
            <person name="Roche B."/>
            <person name="Rose M."/>
            <person name="Sadaie Y."/>
            <person name="Sato T."/>
            <person name="Scanlan E."/>
            <person name="Schleich S."/>
            <person name="Schroeter R."/>
            <person name="Scoffone F."/>
            <person name="Sekiguchi J."/>
            <person name="Sekowska A."/>
            <person name="Seror S.J."/>
            <person name="Serror P."/>
            <person name="Shin B.-S."/>
            <person name="Soldo B."/>
            <person name="Sorokin A."/>
            <person name="Tacconi E."/>
            <person name="Takagi T."/>
            <person name="Takahashi H."/>
            <person name="Takemaru K."/>
            <person name="Takeuchi M."/>
            <person name="Tamakoshi A."/>
            <person name="Tanaka T."/>
            <person name="Terpstra P."/>
            <person name="Tognoni A."/>
            <person name="Tosato V."/>
            <person name="Uchiyama S."/>
            <person name="Vandenbol M."/>
            <person name="Vannier F."/>
            <person name="Vassarotti A."/>
            <person name="Viari A."/>
            <person name="Wambutt R."/>
            <person name="Wedler E."/>
            <person name="Wedler H."/>
            <person name="Weitzenegger T."/>
            <person name="Winters P."/>
            <person name="Wipat A."/>
            <person name="Yamamoto H."/>
            <person name="Yamane K."/>
            <person name="Yasumoto K."/>
            <person name="Yata K."/>
            <person name="Yoshida K."/>
            <person name="Yoshikawa H.-F."/>
            <person name="Zumstein E."/>
            <person name="Yoshikawa H."/>
            <person name="Danchin A."/>
        </authorList>
    </citation>
    <scope>NUCLEOTIDE SEQUENCE [LARGE SCALE GENOMIC DNA]</scope>
    <source>
        <strain>168</strain>
    </source>
</reference>
<reference key="3">
    <citation type="journal article" date="2001" name="J. Bacteriol.">
        <title>Comprehensive DNA microarray analysis of Bacillus subtilis two-component regulatory systems.</title>
        <authorList>
            <person name="Kobayashi K."/>
            <person name="Ogura M."/>
            <person name="Yamaguchi H."/>
            <person name="Yoshida K."/>
            <person name="Ogasawara N."/>
            <person name="Tanaka T."/>
            <person name="Fujita Y."/>
        </authorList>
    </citation>
    <scope>FUNCTION</scope>
</reference>
<reference key="4">
    <citation type="journal article" date="2005" name="Microbiology">
        <title>The Bacillus subtilis YdfHI two-component system regulates the transcription of ydfJ, a member of the RND superfamily.</title>
        <authorList>
            <person name="Serizawa M."/>
            <person name="Sekiguchi J."/>
        </authorList>
    </citation>
    <scope>FUNCTION</scope>
    <source>
        <strain>168</strain>
    </source>
</reference>
<protein>
    <recommendedName>
        <fullName>Transcriptional regulatory protein YdfI</fullName>
    </recommendedName>
</protein>
<feature type="chain" id="PRO_0000081394" description="Transcriptional regulatory protein YdfI">
    <location>
        <begin position="1"/>
        <end position="213"/>
    </location>
</feature>
<feature type="domain" description="Response regulatory" evidence="1">
    <location>
        <begin position="3"/>
        <end position="118"/>
    </location>
</feature>
<feature type="domain" description="HTH luxR-type" evidence="2">
    <location>
        <begin position="142"/>
        <end position="207"/>
    </location>
</feature>
<feature type="DNA-binding region" description="H-T-H motif" evidence="2">
    <location>
        <begin position="166"/>
        <end position="185"/>
    </location>
</feature>
<feature type="modified residue" description="4-aspartylphosphate" evidence="1">
    <location>
        <position position="54"/>
    </location>
</feature>
<keyword id="KW-0963">Cytoplasm</keyword>
<keyword id="KW-0238">DNA-binding</keyword>
<keyword id="KW-0597">Phosphoprotein</keyword>
<keyword id="KW-1185">Reference proteome</keyword>
<keyword id="KW-0804">Transcription</keyword>
<keyword id="KW-0805">Transcription regulation</keyword>
<keyword id="KW-0902">Two-component regulatory system</keyword>
<accession>P96686</accession>
<accession>Q797G5</accession>
<evidence type="ECO:0000255" key="1">
    <source>
        <dbReference type="PROSITE-ProRule" id="PRU00169"/>
    </source>
</evidence>
<evidence type="ECO:0000255" key="2">
    <source>
        <dbReference type="PROSITE-ProRule" id="PRU00411"/>
    </source>
</evidence>
<evidence type="ECO:0000269" key="3">
    <source>
    </source>
</evidence>
<evidence type="ECO:0000269" key="4">
    <source>
    </source>
</evidence>
<evidence type="ECO:0000305" key="5"/>
<name>YDFI_BACSU</name>
<proteinExistence type="inferred from homology"/>
<gene>
    <name type="primary">ydfI</name>
    <name type="ordered locus">BSU05420</name>
</gene>